<organism>
    <name type="scientific">Dechloromonas aromatica (strain RCB)</name>
    <dbReference type="NCBI Taxonomy" id="159087"/>
    <lineage>
        <taxon>Bacteria</taxon>
        <taxon>Pseudomonadati</taxon>
        <taxon>Pseudomonadota</taxon>
        <taxon>Betaproteobacteria</taxon>
        <taxon>Rhodocyclales</taxon>
        <taxon>Azonexaceae</taxon>
        <taxon>Dechloromonas</taxon>
    </lineage>
</organism>
<gene>
    <name type="ordered locus">Daro_2080</name>
</gene>
<name>Y2080_DECAR</name>
<dbReference type="EMBL" id="CP000089">
    <property type="protein sequence ID" value="AAZ46824.1"/>
    <property type="molecule type" value="Genomic_DNA"/>
</dbReference>
<dbReference type="STRING" id="159087.Daro_2080"/>
<dbReference type="KEGG" id="dar:Daro_2080"/>
<dbReference type="eggNOG" id="COG5487">
    <property type="taxonomic scope" value="Bacteria"/>
</dbReference>
<dbReference type="HOGENOM" id="CLU_187346_0_1_4"/>
<dbReference type="OrthoDB" id="5461362at2"/>
<dbReference type="GO" id="GO:0005886">
    <property type="term" value="C:plasma membrane"/>
    <property type="evidence" value="ECO:0007669"/>
    <property type="project" value="UniProtKB-SubCell"/>
</dbReference>
<dbReference type="HAMAP" id="MF_01361">
    <property type="entry name" value="UPF0391"/>
    <property type="match status" value="1"/>
</dbReference>
<dbReference type="InterPro" id="IPR009760">
    <property type="entry name" value="DUF1328"/>
</dbReference>
<dbReference type="NCBIfam" id="NF010226">
    <property type="entry name" value="PRK13682.1-1"/>
    <property type="match status" value="1"/>
</dbReference>
<dbReference type="NCBIfam" id="NF010229">
    <property type="entry name" value="PRK13682.1-4"/>
    <property type="match status" value="1"/>
</dbReference>
<dbReference type="Pfam" id="PF07043">
    <property type="entry name" value="DUF1328"/>
    <property type="match status" value="1"/>
</dbReference>
<dbReference type="PIRSF" id="PIRSF036466">
    <property type="entry name" value="UCP036466"/>
    <property type="match status" value="1"/>
</dbReference>
<reference key="1">
    <citation type="journal article" date="2009" name="BMC Genomics">
        <title>Metabolic analysis of the soil microbe Dechloromonas aromatica str. RCB: indications of a surprisingly complex life-style and cryptic anaerobic pathways for aromatic degradation.</title>
        <authorList>
            <person name="Salinero K.K."/>
            <person name="Keller K."/>
            <person name="Feil W.S."/>
            <person name="Feil H."/>
            <person name="Trong S."/>
            <person name="Di Bartolo G."/>
            <person name="Lapidus A."/>
        </authorList>
    </citation>
    <scope>NUCLEOTIDE SEQUENCE [LARGE SCALE GENOMIC DNA]</scope>
    <source>
        <strain>RCB</strain>
    </source>
</reference>
<accession>Q47EA7</accession>
<evidence type="ECO:0000255" key="1">
    <source>
        <dbReference type="HAMAP-Rule" id="MF_01361"/>
    </source>
</evidence>
<proteinExistence type="inferred from homology"/>
<comment type="subcellular location">
    <subcellularLocation>
        <location evidence="1">Cell membrane</location>
        <topology evidence="1">Multi-pass membrane protein</topology>
    </subcellularLocation>
</comment>
<comment type="similarity">
    <text evidence="1">Belongs to the UPF0391 family.</text>
</comment>
<feature type="chain" id="PRO_0000256731" description="UPF0391 membrane protein Daro_2080">
    <location>
        <begin position="1"/>
        <end position="54"/>
    </location>
</feature>
<feature type="transmembrane region" description="Helical" evidence="1">
    <location>
        <begin position="5"/>
        <end position="25"/>
    </location>
</feature>
<feature type="transmembrane region" description="Helical" evidence="1">
    <location>
        <begin position="30"/>
        <end position="50"/>
    </location>
</feature>
<sequence length="54" mass="5956">MLRYAIVFFIIALIAALFGFTGIAAGAVEIAKIMFFIFVLLALVSLVMGFTRRK</sequence>
<keyword id="KW-1003">Cell membrane</keyword>
<keyword id="KW-0472">Membrane</keyword>
<keyword id="KW-0812">Transmembrane</keyword>
<keyword id="KW-1133">Transmembrane helix</keyword>
<protein>
    <recommendedName>
        <fullName evidence="1">UPF0391 membrane protein Daro_2080</fullName>
    </recommendedName>
</protein>